<organism>
    <name type="scientific">Bitis gabonica</name>
    <name type="common">Gaboon adder</name>
    <name type="synonym">Gaboon viper</name>
    <dbReference type="NCBI Taxonomy" id="8694"/>
    <lineage>
        <taxon>Eukaryota</taxon>
        <taxon>Metazoa</taxon>
        <taxon>Chordata</taxon>
        <taxon>Craniata</taxon>
        <taxon>Vertebrata</taxon>
        <taxon>Euteleostomi</taxon>
        <taxon>Lepidosauria</taxon>
        <taxon>Squamata</taxon>
        <taxon>Bifurcata</taxon>
        <taxon>Unidentata</taxon>
        <taxon>Episquamata</taxon>
        <taxon>Toxicofera</taxon>
        <taxon>Serpentes</taxon>
        <taxon>Colubroidea</taxon>
        <taxon>Viperidae</taxon>
        <taxon>Viperinae</taxon>
        <taxon>Bitis</taxon>
    </lineage>
</organism>
<sequence length="157" mass="18095">MGRLIFLSFGWLVVFLSLSGTGADFQCPSEWSAYGQHCYRAFSDLKTWEDAEKFCTEQEKAGHLVSIQSIQEANFVAQLVSGFISGSPKIYIWIGLRDRRKEQQCSSEWNDGSKVIYVNWREGESQMCQALTKWTEFHQWLNTDCAGHYPFICKSRV</sequence>
<accession>Q6T7B5</accession>
<name>SL3_BITGA</name>
<feature type="signal peptide" evidence="1">
    <location>
        <begin position="1"/>
        <end position="23"/>
    </location>
</feature>
<feature type="chain" id="PRO_0000355250" description="Snaclec 3">
    <location>
        <begin position="24"/>
        <end position="157"/>
    </location>
</feature>
<feature type="domain" description="C-type lectin" evidence="2">
    <location>
        <begin position="34"/>
        <end position="154"/>
    </location>
</feature>
<feature type="disulfide bond" evidence="2">
    <location>
        <begin position="27"/>
        <end position="38"/>
    </location>
</feature>
<feature type="disulfide bond" evidence="2">
    <location>
        <begin position="55"/>
        <end position="153"/>
    </location>
</feature>
<feature type="disulfide bond" description="Interchain" evidence="2">
    <location>
        <position position="105"/>
    </location>
</feature>
<feature type="disulfide bond" evidence="2">
    <location>
        <begin position="128"/>
        <end position="145"/>
    </location>
</feature>
<evidence type="ECO:0000250" key="1"/>
<evidence type="ECO:0000255" key="2">
    <source>
        <dbReference type="PROSITE-ProRule" id="PRU00040"/>
    </source>
</evidence>
<evidence type="ECO:0000305" key="3"/>
<protein>
    <recommendedName>
        <fullName>Snaclec 3</fullName>
    </recommendedName>
    <alternativeName>
        <fullName>C-type lectin 3</fullName>
    </alternativeName>
</protein>
<comment type="function">
    <text evidence="1">Interferes with one step of hemostasis (modulation of platelet aggregation, or coagulation cascade, for example).</text>
</comment>
<comment type="subunit">
    <text evidence="1">Heterodimer; disulfide-linked.</text>
</comment>
<comment type="subcellular location">
    <subcellularLocation>
        <location evidence="1">Secreted</location>
    </subcellularLocation>
</comment>
<comment type="tissue specificity">
    <text>Expressed by the venom gland.</text>
</comment>
<comment type="miscellaneous">
    <text>Shows greater sequence similarity to the alpha than beta subunits compared to other heterodimer snaclecs.</text>
</comment>
<comment type="similarity">
    <text evidence="3">Belongs to the snaclec family.</text>
</comment>
<keyword id="KW-1015">Disulfide bond</keyword>
<keyword id="KW-1199">Hemostasis impairing toxin</keyword>
<keyword id="KW-0964">Secreted</keyword>
<keyword id="KW-0732">Signal</keyword>
<keyword id="KW-0800">Toxin</keyword>
<proteinExistence type="evidence at transcript level"/>
<reference key="1">
    <citation type="journal article" date="2004" name="Gene">
        <title>Bitis gabonica (Gaboon viper) snake venom gland: toward a catalog for the full-length transcripts (cDNA) and proteins.</title>
        <authorList>
            <person name="Francischetti I.M.B."/>
            <person name="My-Pham V."/>
            <person name="Harrison J."/>
            <person name="Garfield M.K."/>
            <person name="Ribeiro J.M.C."/>
        </authorList>
    </citation>
    <scope>NUCLEOTIDE SEQUENCE [MRNA]</scope>
    <source>
        <tissue>Venom gland</tissue>
    </source>
</reference>
<dbReference type="EMBL" id="AY429479">
    <property type="protein sequence ID" value="AAR06853.1"/>
    <property type="molecule type" value="mRNA"/>
</dbReference>
<dbReference type="SMR" id="Q6T7B5"/>
<dbReference type="GO" id="GO:0005576">
    <property type="term" value="C:extracellular region"/>
    <property type="evidence" value="ECO:0007669"/>
    <property type="project" value="UniProtKB-SubCell"/>
</dbReference>
<dbReference type="GO" id="GO:0090729">
    <property type="term" value="F:toxin activity"/>
    <property type="evidence" value="ECO:0007669"/>
    <property type="project" value="UniProtKB-KW"/>
</dbReference>
<dbReference type="FunFam" id="3.10.100.10:FF:000087">
    <property type="entry name" value="Snaclec rhodocetin subunit delta"/>
    <property type="match status" value="1"/>
</dbReference>
<dbReference type="Gene3D" id="3.10.100.10">
    <property type="entry name" value="Mannose-Binding Protein A, subunit A"/>
    <property type="match status" value="1"/>
</dbReference>
<dbReference type="InterPro" id="IPR001304">
    <property type="entry name" value="C-type_lectin-like"/>
</dbReference>
<dbReference type="InterPro" id="IPR016186">
    <property type="entry name" value="C-type_lectin-like/link_sf"/>
</dbReference>
<dbReference type="InterPro" id="IPR050111">
    <property type="entry name" value="C-type_lectin/snaclec_domain"/>
</dbReference>
<dbReference type="InterPro" id="IPR016187">
    <property type="entry name" value="CTDL_fold"/>
</dbReference>
<dbReference type="PANTHER" id="PTHR22803">
    <property type="entry name" value="MANNOSE, PHOSPHOLIPASE, LECTIN RECEPTOR RELATED"/>
    <property type="match status" value="1"/>
</dbReference>
<dbReference type="Pfam" id="PF00059">
    <property type="entry name" value="Lectin_C"/>
    <property type="match status" value="1"/>
</dbReference>
<dbReference type="PRINTS" id="PR01504">
    <property type="entry name" value="PNCREATITSAP"/>
</dbReference>
<dbReference type="SMART" id="SM00034">
    <property type="entry name" value="CLECT"/>
    <property type="match status" value="1"/>
</dbReference>
<dbReference type="SUPFAM" id="SSF56436">
    <property type="entry name" value="C-type lectin-like"/>
    <property type="match status" value="1"/>
</dbReference>
<dbReference type="PROSITE" id="PS50041">
    <property type="entry name" value="C_TYPE_LECTIN_2"/>
    <property type="match status" value="1"/>
</dbReference>